<gene>
    <name evidence="1" type="primary">grpE</name>
    <name type="ordered locus">XF_2341</name>
</gene>
<organism>
    <name type="scientific">Xylella fastidiosa (strain 9a5c)</name>
    <dbReference type="NCBI Taxonomy" id="160492"/>
    <lineage>
        <taxon>Bacteria</taxon>
        <taxon>Pseudomonadati</taxon>
        <taxon>Pseudomonadota</taxon>
        <taxon>Gammaproteobacteria</taxon>
        <taxon>Lysobacterales</taxon>
        <taxon>Lysobacteraceae</taxon>
        <taxon>Xylella</taxon>
    </lineage>
</organism>
<name>GRPE_XYLFA</name>
<sequence length="172" mass="19299">MNQDHPECDSEELTQNSPETDPLKVEVETLRGEIASIKADVLRERAELENQRKRLIRDVEQARKFANEKLLGELLPVFDSLDAGLTASGSEPSPLRDGLELTYKQLLKVATDNGLMLLDPVGQLFNPEHHQAISQTEVTDVEPGYVIQVFQKGYLLNERLLRPALVVVAKQD</sequence>
<feature type="chain" id="PRO_0000113902" description="Protein GrpE">
    <location>
        <begin position="1"/>
        <end position="172"/>
    </location>
</feature>
<feature type="region of interest" description="Disordered" evidence="2">
    <location>
        <begin position="1"/>
        <end position="23"/>
    </location>
</feature>
<evidence type="ECO:0000255" key="1">
    <source>
        <dbReference type="HAMAP-Rule" id="MF_01151"/>
    </source>
</evidence>
<evidence type="ECO:0000256" key="2">
    <source>
        <dbReference type="SAM" id="MobiDB-lite"/>
    </source>
</evidence>
<evidence type="ECO:0000305" key="3"/>
<keyword id="KW-0143">Chaperone</keyword>
<keyword id="KW-0963">Cytoplasm</keyword>
<keyword id="KW-0346">Stress response</keyword>
<protein>
    <recommendedName>
        <fullName evidence="1">Protein GrpE</fullName>
    </recommendedName>
    <alternativeName>
        <fullName evidence="1">HSP-70 cofactor</fullName>
    </alternativeName>
</protein>
<proteinExistence type="inferred from homology"/>
<accession>Q9PB04</accession>
<comment type="function">
    <text evidence="1">Participates actively in the response to hyperosmotic and heat shock by preventing the aggregation of stress-denatured proteins, in association with DnaK and GrpE. It is the nucleotide exchange factor for DnaK and may function as a thermosensor. Unfolded proteins bind initially to DnaJ; upon interaction with the DnaJ-bound protein, DnaK hydrolyzes its bound ATP, resulting in the formation of a stable complex. GrpE releases ADP from DnaK; ATP binding to DnaK triggers the release of the substrate protein, thus completing the reaction cycle. Several rounds of ATP-dependent interactions between DnaJ, DnaK and GrpE are required for fully efficient folding.</text>
</comment>
<comment type="subunit">
    <text evidence="1">Homodimer.</text>
</comment>
<comment type="subcellular location">
    <subcellularLocation>
        <location evidence="1">Cytoplasm</location>
    </subcellularLocation>
</comment>
<comment type="similarity">
    <text evidence="1">Belongs to the GrpE family.</text>
</comment>
<comment type="sequence caution" evidence="3">
    <conflict type="erroneous initiation">
        <sequence resource="EMBL-CDS" id="AAF85140"/>
    </conflict>
</comment>
<dbReference type="EMBL" id="AE003849">
    <property type="protein sequence ID" value="AAF85140.1"/>
    <property type="status" value="ALT_INIT"/>
    <property type="molecule type" value="Genomic_DNA"/>
</dbReference>
<dbReference type="PIR" id="H82570">
    <property type="entry name" value="H82570"/>
</dbReference>
<dbReference type="RefSeq" id="WP_031337644.1">
    <property type="nucleotide sequence ID" value="NC_002488.3"/>
</dbReference>
<dbReference type="SMR" id="Q9PB04"/>
<dbReference type="STRING" id="160492.XF_2341"/>
<dbReference type="KEGG" id="xfa:XF_2341"/>
<dbReference type="eggNOG" id="COG0576">
    <property type="taxonomic scope" value="Bacteria"/>
</dbReference>
<dbReference type="HOGENOM" id="CLU_057217_6_0_6"/>
<dbReference type="Proteomes" id="UP000000812">
    <property type="component" value="Chromosome"/>
</dbReference>
<dbReference type="GO" id="GO:0005829">
    <property type="term" value="C:cytosol"/>
    <property type="evidence" value="ECO:0007669"/>
    <property type="project" value="TreeGrafter"/>
</dbReference>
<dbReference type="GO" id="GO:0000774">
    <property type="term" value="F:adenyl-nucleotide exchange factor activity"/>
    <property type="evidence" value="ECO:0007669"/>
    <property type="project" value="InterPro"/>
</dbReference>
<dbReference type="GO" id="GO:0042803">
    <property type="term" value="F:protein homodimerization activity"/>
    <property type="evidence" value="ECO:0007669"/>
    <property type="project" value="InterPro"/>
</dbReference>
<dbReference type="GO" id="GO:0051087">
    <property type="term" value="F:protein-folding chaperone binding"/>
    <property type="evidence" value="ECO:0007669"/>
    <property type="project" value="InterPro"/>
</dbReference>
<dbReference type="GO" id="GO:0051082">
    <property type="term" value="F:unfolded protein binding"/>
    <property type="evidence" value="ECO:0007669"/>
    <property type="project" value="TreeGrafter"/>
</dbReference>
<dbReference type="GO" id="GO:0006457">
    <property type="term" value="P:protein folding"/>
    <property type="evidence" value="ECO:0007669"/>
    <property type="project" value="InterPro"/>
</dbReference>
<dbReference type="CDD" id="cd00446">
    <property type="entry name" value="GrpE"/>
    <property type="match status" value="1"/>
</dbReference>
<dbReference type="FunFam" id="2.30.22.10:FF:000001">
    <property type="entry name" value="Protein GrpE"/>
    <property type="match status" value="1"/>
</dbReference>
<dbReference type="Gene3D" id="3.90.20.20">
    <property type="match status" value="1"/>
</dbReference>
<dbReference type="Gene3D" id="2.30.22.10">
    <property type="entry name" value="Head domain of nucleotide exchange factor GrpE"/>
    <property type="match status" value="1"/>
</dbReference>
<dbReference type="HAMAP" id="MF_01151">
    <property type="entry name" value="GrpE"/>
    <property type="match status" value="1"/>
</dbReference>
<dbReference type="InterPro" id="IPR000740">
    <property type="entry name" value="GrpE"/>
</dbReference>
<dbReference type="InterPro" id="IPR013805">
    <property type="entry name" value="GrpE_coiled_coil"/>
</dbReference>
<dbReference type="InterPro" id="IPR009012">
    <property type="entry name" value="GrpE_head"/>
</dbReference>
<dbReference type="NCBIfam" id="NF010745">
    <property type="entry name" value="PRK14147.1"/>
    <property type="match status" value="1"/>
</dbReference>
<dbReference type="PANTHER" id="PTHR21237">
    <property type="entry name" value="GRPE PROTEIN"/>
    <property type="match status" value="1"/>
</dbReference>
<dbReference type="PANTHER" id="PTHR21237:SF23">
    <property type="entry name" value="GRPE PROTEIN HOMOLOG, MITOCHONDRIAL"/>
    <property type="match status" value="1"/>
</dbReference>
<dbReference type="Pfam" id="PF01025">
    <property type="entry name" value="GrpE"/>
    <property type="match status" value="1"/>
</dbReference>
<dbReference type="PRINTS" id="PR00773">
    <property type="entry name" value="GRPEPROTEIN"/>
</dbReference>
<dbReference type="SUPFAM" id="SSF58014">
    <property type="entry name" value="Coiled-coil domain of nucleotide exchange factor GrpE"/>
    <property type="match status" value="1"/>
</dbReference>
<dbReference type="SUPFAM" id="SSF51064">
    <property type="entry name" value="Head domain of nucleotide exchange factor GrpE"/>
    <property type="match status" value="1"/>
</dbReference>
<dbReference type="PROSITE" id="PS01071">
    <property type="entry name" value="GRPE"/>
    <property type="match status" value="1"/>
</dbReference>
<reference key="1">
    <citation type="journal article" date="2000" name="Nature">
        <title>The genome sequence of the plant pathogen Xylella fastidiosa.</title>
        <authorList>
            <person name="Simpson A.J.G."/>
            <person name="Reinach F.C."/>
            <person name="Arruda P."/>
            <person name="Abreu F.A."/>
            <person name="Acencio M."/>
            <person name="Alvarenga R."/>
            <person name="Alves L.M.C."/>
            <person name="Araya J.E."/>
            <person name="Baia G.S."/>
            <person name="Baptista C.S."/>
            <person name="Barros M.H."/>
            <person name="Bonaccorsi E.D."/>
            <person name="Bordin S."/>
            <person name="Bove J.M."/>
            <person name="Briones M.R.S."/>
            <person name="Bueno M.R.P."/>
            <person name="Camargo A.A."/>
            <person name="Camargo L.E.A."/>
            <person name="Carraro D.M."/>
            <person name="Carrer H."/>
            <person name="Colauto N.B."/>
            <person name="Colombo C."/>
            <person name="Costa F.F."/>
            <person name="Costa M.C.R."/>
            <person name="Costa-Neto C.M."/>
            <person name="Coutinho L.L."/>
            <person name="Cristofani M."/>
            <person name="Dias-Neto E."/>
            <person name="Docena C."/>
            <person name="El-Dorry H."/>
            <person name="Facincani A.P."/>
            <person name="Ferreira A.J.S."/>
            <person name="Ferreira V.C.A."/>
            <person name="Ferro J.A."/>
            <person name="Fraga J.S."/>
            <person name="Franca S.C."/>
            <person name="Franco M.C."/>
            <person name="Frohme M."/>
            <person name="Furlan L.R."/>
            <person name="Garnier M."/>
            <person name="Goldman G.H."/>
            <person name="Goldman M.H.S."/>
            <person name="Gomes S.L."/>
            <person name="Gruber A."/>
            <person name="Ho P.L."/>
            <person name="Hoheisel J.D."/>
            <person name="Junqueira M.L."/>
            <person name="Kemper E.L."/>
            <person name="Kitajima J.P."/>
            <person name="Krieger J.E."/>
            <person name="Kuramae E.E."/>
            <person name="Laigret F."/>
            <person name="Lambais M.R."/>
            <person name="Leite L.C.C."/>
            <person name="Lemos E.G.M."/>
            <person name="Lemos M.V.F."/>
            <person name="Lopes S.A."/>
            <person name="Lopes C.R."/>
            <person name="Machado J.A."/>
            <person name="Machado M.A."/>
            <person name="Madeira A.M.B.N."/>
            <person name="Madeira H.M.F."/>
            <person name="Marino C.L."/>
            <person name="Marques M.V."/>
            <person name="Martins E.A.L."/>
            <person name="Martins E.M.F."/>
            <person name="Matsukuma A.Y."/>
            <person name="Menck C.F.M."/>
            <person name="Miracca E.C."/>
            <person name="Miyaki C.Y."/>
            <person name="Monteiro-Vitorello C.B."/>
            <person name="Moon D.H."/>
            <person name="Nagai M.A."/>
            <person name="Nascimento A.L.T.O."/>
            <person name="Netto L.E.S."/>
            <person name="Nhani A. Jr."/>
            <person name="Nobrega F.G."/>
            <person name="Nunes L.R."/>
            <person name="Oliveira M.A."/>
            <person name="de Oliveira M.C."/>
            <person name="de Oliveira R.C."/>
            <person name="Palmieri D.A."/>
            <person name="Paris A."/>
            <person name="Peixoto B.R."/>
            <person name="Pereira G.A.G."/>
            <person name="Pereira H.A. Jr."/>
            <person name="Pesquero J.B."/>
            <person name="Quaggio R.B."/>
            <person name="Roberto P.G."/>
            <person name="Rodrigues V."/>
            <person name="de Rosa A.J.M."/>
            <person name="de Rosa V.E. Jr."/>
            <person name="de Sa R.G."/>
            <person name="Santelli R.V."/>
            <person name="Sawasaki H.E."/>
            <person name="da Silva A.C.R."/>
            <person name="da Silva A.M."/>
            <person name="da Silva F.R."/>
            <person name="Silva W.A. Jr."/>
            <person name="da Silveira J.F."/>
            <person name="Silvestri M.L.Z."/>
            <person name="Siqueira W.J."/>
            <person name="de Souza A.A."/>
            <person name="de Souza A.P."/>
            <person name="Terenzi M.F."/>
            <person name="Truffi D."/>
            <person name="Tsai S.M."/>
            <person name="Tsuhako M.H."/>
            <person name="Vallada H."/>
            <person name="Van Sluys M.A."/>
            <person name="Verjovski-Almeida S."/>
            <person name="Vettore A.L."/>
            <person name="Zago M.A."/>
            <person name="Zatz M."/>
            <person name="Meidanis J."/>
            <person name="Setubal J.C."/>
        </authorList>
    </citation>
    <scope>NUCLEOTIDE SEQUENCE [LARGE SCALE GENOMIC DNA]</scope>
    <source>
        <strain>9a5c</strain>
    </source>
</reference>